<accession>Q86TC9</accession>
<accession>Q5VV35</accession>
<accession>Q5VV36</accession>
<accession>Q86T37</accession>
<accession>Q8N3L4</accession>
<accession>Q96K90</accession>
<accession>Q96KF5</accession>
<comment type="function">
    <text evidence="5">Component of the sarcomere that tethers together nebulin (skeletal muscle) and nebulette (cardiac muscle) to alpha-actinin, at the Z lines.</text>
</comment>
<comment type="subunit">
    <text evidence="5 6">Interacts with TTN/titin, NEB, NEBL, ACTN2 and CARP.</text>
</comment>
<comment type="interaction">
    <interactant intactId="EBI-2562606">
        <id>Q86TC9</id>
    </interactant>
    <interactant intactId="EBI-1049657">
        <id>P20929</id>
        <label>NEB</label>
    </interactant>
    <organismsDiffer>false</organismsDiffer>
    <experiments>2</experiments>
</comment>
<comment type="subcellular location">
    <subcellularLocation>
        <location evidence="5">Cytoplasm</location>
    </subcellularLocation>
    <subcellularLocation>
        <location evidence="5">Nucleus</location>
    </subcellularLocation>
    <subcellularLocation>
        <location evidence="5">Cytoplasm</location>
        <location evidence="5">Myofibril</location>
        <location evidence="5">Sarcomere</location>
    </subcellularLocation>
    <subcellularLocation>
        <location evidence="5 12">Cytoplasm</location>
        <location evidence="5 12">Myofibril</location>
        <location evidence="5 12">Sarcomere</location>
        <location evidence="5 12">Z line</location>
    </subcellularLocation>
    <text evidence="5">Bound to sarcomere both at the Z-line periphery and in the central I-band region.</text>
</comment>
<comment type="alternative products">
    <event type="alternative splicing"/>
    <isoform>
        <id>Q86TC9-1</id>
        <name>1</name>
        <sequence type="displayed"/>
    </isoform>
    <isoform>
        <id>Q86TC9-2</id>
        <name>2</name>
        <sequence type="described" ref="VSP_019384 VSP_019385"/>
    </isoform>
</comment>
<comment type="tissue specificity">
    <text evidence="5">Expressed in adult skeletal muscle and fetal heart.</text>
</comment>
<comment type="disease" evidence="12">
    <disease id="DI-04947">
        <name>Congenital myopathy 24</name>
        <acronym>CMYO24</acronym>
        <description>An autosomal recessive muscular disorder characterized by slowly progressive muscle weakness and atrophy, mainly affecting the lower limbs and neck. Some patients may have mild cardiac or respiratory involvement, but they do not have respiratory failure. Muscle biopsy shows nemaline bodies.</description>
        <dbReference type="MIM" id="617336"/>
    </disease>
    <text>The disease is caused by variants affecting the gene represented in this entry.</text>
</comment>
<comment type="disease" evidence="7 8 9">
    <disease id="DI-03730">
        <name>Cardiomyopathy, dilated, 1KK</name>
        <acronym>CMD1KK</acronym>
        <description>A disorder characterized by ventricular dilation and impaired systolic function, resulting in congestive heart failure and arrhythmia. Patients are at risk of premature death.</description>
        <dbReference type="MIM" id="615248"/>
    </disease>
    <text>The disease is caused by variants affecting the gene represented in this entry.</text>
</comment>
<comment type="disease" evidence="8">
    <disease id="DI-03731">
        <name>Cardiomyopathy, familial hypertrophic, 22</name>
        <acronym>CMH22</acronym>
        <description>A hereditary heart disorder characterized by ventricular hypertrophy, which is usually asymmetric and often involves the interventricular septum. The symptoms include dyspnea, syncope, collapse, palpitations, and chest pain. They can be readily provoked by exercise. The disorder has inter- and intrafamilial variability ranging from benign to malignant forms with high risk of cardiac failure and sudden cardiac death.</description>
        <dbReference type="MIM" id="615248"/>
    </disease>
    <text>The disease is caused by variants affecting the gene represented in this entry.</text>
</comment>
<comment type="disease" evidence="8">
    <disease id="DI-03732">
        <name>Cardiomyopathy, familial restrictive 4</name>
        <acronym>RCM4</acronym>
        <description>A heart disorder characterized by impaired filling of the ventricles with reduced diastolic volume, in the presence of normal or near normal wall thickness and systolic function.</description>
        <dbReference type="MIM" id="615248"/>
    </disease>
    <text>The disease is caused by variants affecting the gene represented in this entry.</text>
</comment>
<comment type="similarity">
    <text evidence="14">Belongs to the myotilin/palladin family.</text>
</comment>
<comment type="sequence caution" evidence="14">
    <conflict type="miscellaneous discrepancy">
        <sequence resource="EMBL-CDS" id="BAB55048"/>
    </conflict>
    <text>Probable cloning artifact.</text>
</comment>
<comment type="sequence caution" evidence="14">
    <conflict type="erroneous initiation">
        <sequence resource="EMBL-CDS" id="CAD38923"/>
    </conflict>
    <text>Extended N-terminus.</text>
</comment>
<keyword id="KW-0009">Actin-binding</keyword>
<keyword id="KW-0025">Alternative splicing</keyword>
<keyword id="KW-0122">Cardiomyopathy</keyword>
<keyword id="KW-0175">Coiled coil</keyword>
<keyword id="KW-0963">Cytoplasm</keyword>
<keyword id="KW-0225">Disease variant</keyword>
<keyword id="KW-1015">Disulfide bond</keyword>
<keyword id="KW-0393">Immunoglobulin domain</keyword>
<keyword id="KW-1057">Nemaline myopathy</keyword>
<keyword id="KW-0539">Nucleus</keyword>
<keyword id="KW-0597">Phosphoprotein</keyword>
<keyword id="KW-1267">Proteomics identification</keyword>
<keyword id="KW-1185">Reference proteome</keyword>
<keyword id="KW-0677">Repeat</keyword>
<dbReference type="EMBL" id="AF328296">
    <property type="protein sequence ID" value="AAK50625.1"/>
    <property type="molecule type" value="mRNA"/>
</dbReference>
<dbReference type="EMBL" id="AL832002">
    <property type="protein sequence ID" value="CAD89906.1"/>
    <property type="molecule type" value="mRNA"/>
</dbReference>
<dbReference type="EMBL" id="AL832379">
    <property type="protein sequence ID" value="CAD91155.1"/>
    <property type="molecule type" value="mRNA"/>
</dbReference>
<dbReference type="EMBL" id="AL834247">
    <property type="protein sequence ID" value="CAD38923.2"/>
    <property type="status" value="ALT_INIT"/>
    <property type="molecule type" value="mRNA"/>
</dbReference>
<dbReference type="EMBL" id="AC016395">
    <property type="status" value="NOT_ANNOTATED_CDS"/>
    <property type="molecule type" value="Genomic_DNA"/>
</dbReference>
<dbReference type="EMBL" id="AC024258">
    <property type="status" value="NOT_ANNOTATED_CDS"/>
    <property type="molecule type" value="Genomic_DNA"/>
</dbReference>
<dbReference type="EMBL" id="AL512429">
    <property type="status" value="NOT_ANNOTATED_CDS"/>
    <property type="molecule type" value="Genomic_DNA"/>
</dbReference>
<dbReference type="EMBL" id="AK027343">
    <property type="protein sequence ID" value="BAB55048.1"/>
    <property type="status" value="ALT_SEQ"/>
    <property type="molecule type" value="mRNA"/>
</dbReference>
<dbReference type="CCDS" id="CCDS7275.1">
    <molecule id="Q86TC9-1"/>
</dbReference>
<dbReference type="RefSeq" id="NP_001243196.1">
    <molecule id="Q86TC9-1"/>
    <property type="nucleotide sequence ID" value="NM_001256267.2"/>
</dbReference>
<dbReference type="RefSeq" id="NP_115967.2">
    <molecule id="Q86TC9-1"/>
    <property type="nucleotide sequence ID" value="NM_032578.4"/>
</dbReference>
<dbReference type="RefSeq" id="XP_016872323.1">
    <molecule id="Q86TC9-1"/>
    <property type="nucleotide sequence ID" value="XM_017016834.3"/>
</dbReference>
<dbReference type="BioGRID" id="124185">
    <property type="interactions" value="33"/>
</dbReference>
<dbReference type="FunCoup" id="Q86TC9">
    <property type="interactions" value="387"/>
</dbReference>
<dbReference type="IntAct" id="Q86TC9">
    <property type="interactions" value="18"/>
</dbReference>
<dbReference type="MINT" id="Q86TC9"/>
<dbReference type="STRING" id="9606.ENSP00000351790"/>
<dbReference type="GlyGen" id="Q86TC9">
    <property type="glycosylation" value="12 sites, 1 O-linked glycan (10 sites)"/>
</dbReference>
<dbReference type="iPTMnet" id="Q86TC9"/>
<dbReference type="PhosphoSitePlus" id="Q86TC9"/>
<dbReference type="BioMuta" id="MYPN"/>
<dbReference type="DMDM" id="109892761"/>
<dbReference type="jPOST" id="Q86TC9"/>
<dbReference type="MassIVE" id="Q86TC9"/>
<dbReference type="PaxDb" id="9606-ENSP00000351790"/>
<dbReference type="PeptideAtlas" id="Q86TC9"/>
<dbReference type="ProteomicsDB" id="69683">
    <molecule id="Q86TC9-1"/>
</dbReference>
<dbReference type="ProteomicsDB" id="69684">
    <molecule id="Q86TC9-2"/>
</dbReference>
<dbReference type="Pumba" id="Q86TC9"/>
<dbReference type="Antibodypedia" id="28426">
    <property type="antibodies" value="115 antibodies from 22 providers"/>
</dbReference>
<dbReference type="DNASU" id="84665"/>
<dbReference type="Ensembl" id="ENST00000354393.7">
    <molecule id="Q86TC9-2"/>
    <property type="protein sequence ID" value="ENSP00000346369.2"/>
    <property type="gene ID" value="ENSG00000138347.17"/>
</dbReference>
<dbReference type="Ensembl" id="ENST00000358913.10">
    <molecule id="Q86TC9-1"/>
    <property type="protein sequence ID" value="ENSP00000351790.5"/>
    <property type="gene ID" value="ENSG00000138347.17"/>
</dbReference>
<dbReference type="Ensembl" id="ENST00000613327.5">
    <molecule id="Q86TC9-1"/>
    <property type="protein sequence ID" value="ENSP00000480757.2"/>
    <property type="gene ID" value="ENSG00000138347.17"/>
</dbReference>
<dbReference type="GeneID" id="84665"/>
<dbReference type="KEGG" id="hsa:84665"/>
<dbReference type="MANE-Select" id="ENST00000358913.10">
    <property type="protein sequence ID" value="ENSP00000351790.5"/>
    <property type="RefSeq nucleotide sequence ID" value="NM_032578.4"/>
    <property type="RefSeq protein sequence ID" value="NP_115967.2"/>
</dbReference>
<dbReference type="UCSC" id="uc001jnm.6">
    <molecule id="Q86TC9-1"/>
    <property type="organism name" value="human"/>
</dbReference>
<dbReference type="AGR" id="HGNC:23246"/>
<dbReference type="CTD" id="84665"/>
<dbReference type="DisGeNET" id="84665"/>
<dbReference type="GeneCards" id="MYPN"/>
<dbReference type="HGNC" id="HGNC:23246">
    <property type="gene designation" value="MYPN"/>
</dbReference>
<dbReference type="HPA" id="ENSG00000138347">
    <property type="expression patterns" value="Tissue enhanced (heart muscle, skeletal muscle, tongue)"/>
</dbReference>
<dbReference type="MalaCards" id="MYPN"/>
<dbReference type="MIM" id="608517">
    <property type="type" value="gene"/>
</dbReference>
<dbReference type="MIM" id="615248">
    <property type="type" value="phenotype"/>
</dbReference>
<dbReference type="MIM" id="617336">
    <property type="type" value="phenotype"/>
</dbReference>
<dbReference type="neXtProt" id="NX_Q86TC9"/>
<dbReference type="OpenTargets" id="ENSG00000138347"/>
<dbReference type="Orphanet" id="171881">
    <property type="disease" value="Cap myopathy"/>
</dbReference>
<dbReference type="Orphanet" id="171439">
    <property type="disease" value="Childhood-onset nemaline myopathy"/>
</dbReference>
<dbReference type="Orphanet" id="154">
    <property type="disease" value="Familial isolated dilated cardiomyopathy"/>
</dbReference>
<dbReference type="Orphanet" id="75249">
    <property type="disease" value="Familial isolated restrictive cardiomyopathy"/>
</dbReference>
<dbReference type="PharmGKB" id="PA134944534"/>
<dbReference type="VEuPathDB" id="HostDB:ENSG00000138347"/>
<dbReference type="eggNOG" id="ENOG502QSRV">
    <property type="taxonomic scope" value="Eukaryota"/>
</dbReference>
<dbReference type="GeneTree" id="ENSGT00940000153441"/>
<dbReference type="HOGENOM" id="CLU_024873_0_0_1"/>
<dbReference type="InParanoid" id="Q86TC9"/>
<dbReference type="OMA" id="DEMDHKP"/>
<dbReference type="OrthoDB" id="6612025at2759"/>
<dbReference type="PAN-GO" id="Q86TC9">
    <property type="GO annotations" value="6 GO annotations based on evolutionary models"/>
</dbReference>
<dbReference type="PhylomeDB" id="Q86TC9"/>
<dbReference type="TreeFam" id="TF343193"/>
<dbReference type="PathwayCommons" id="Q86TC9"/>
<dbReference type="SignaLink" id="Q86TC9"/>
<dbReference type="BioGRID-ORCS" id="84665">
    <property type="hits" value="18 hits in 1158 CRISPR screens"/>
</dbReference>
<dbReference type="ChiTaRS" id="MYPN">
    <property type="organism name" value="human"/>
</dbReference>
<dbReference type="GeneWiki" id="MYPN"/>
<dbReference type="GenomeRNAi" id="84665"/>
<dbReference type="Pharos" id="Q86TC9">
    <property type="development level" value="Tbio"/>
</dbReference>
<dbReference type="PRO" id="PR:Q86TC9"/>
<dbReference type="Proteomes" id="UP000005640">
    <property type="component" value="Chromosome 10"/>
</dbReference>
<dbReference type="RNAct" id="Q86TC9">
    <property type="molecule type" value="protein"/>
</dbReference>
<dbReference type="Bgee" id="ENSG00000138347">
    <property type="expression patterns" value="Expressed in hindlimb stylopod muscle and 86 other cell types or tissues"/>
</dbReference>
<dbReference type="ExpressionAtlas" id="Q86TC9">
    <property type="expression patterns" value="baseline and differential"/>
</dbReference>
<dbReference type="GO" id="GO:0030424">
    <property type="term" value="C:axon"/>
    <property type="evidence" value="ECO:0000318"/>
    <property type="project" value="GO_Central"/>
</dbReference>
<dbReference type="GO" id="GO:0005829">
    <property type="term" value="C:cytosol"/>
    <property type="evidence" value="ECO:0000314"/>
    <property type="project" value="HPA"/>
</dbReference>
<dbReference type="GO" id="GO:0031674">
    <property type="term" value="C:I band"/>
    <property type="evidence" value="ECO:0000314"/>
    <property type="project" value="BHF-UCL"/>
</dbReference>
<dbReference type="GO" id="GO:0043231">
    <property type="term" value="C:intracellular membrane-bounded organelle"/>
    <property type="evidence" value="ECO:0000314"/>
    <property type="project" value="HPA"/>
</dbReference>
<dbReference type="GO" id="GO:0005654">
    <property type="term" value="C:nucleoplasm"/>
    <property type="evidence" value="ECO:0000314"/>
    <property type="project" value="HPA"/>
</dbReference>
<dbReference type="GO" id="GO:0005634">
    <property type="term" value="C:nucleus"/>
    <property type="evidence" value="ECO:0000250"/>
    <property type="project" value="BHF-UCL"/>
</dbReference>
<dbReference type="GO" id="GO:0005886">
    <property type="term" value="C:plasma membrane"/>
    <property type="evidence" value="ECO:0000318"/>
    <property type="project" value="GO_Central"/>
</dbReference>
<dbReference type="GO" id="GO:0030018">
    <property type="term" value="C:Z disc"/>
    <property type="evidence" value="ECO:0000314"/>
    <property type="project" value="UniProtKB"/>
</dbReference>
<dbReference type="GO" id="GO:0003779">
    <property type="term" value="F:actin binding"/>
    <property type="evidence" value="ECO:0007669"/>
    <property type="project" value="UniProtKB-KW"/>
</dbReference>
<dbReference type="GO" id="GO:0098632">
    <property type="term" value="F:cell-cell adhesion mediator activity"/>
    <property type="evidence" value="ECO:0000318"/>
    <property type="project" value="GO_Central"/>
</dbReference>
<dbReference type="GO" id="GO:0008092">
    <property type="term" value="F:cytoskeletal protein binding"/>
    <property type="evidence" value="ECO:0000353"/>
    <property type="project" value="BHF-UCL"/>
</dbReference>
<dbReference type="GO" id="GO:0051371">
    <property type="term" value="F:muscle alpha-actinin binding"/>
    <property type="evidence" value="ECO:0000353"/>
    <property type="project" value="BHF-UCL"/>
</dbReference>
<dbReference type="GO" id="GO:0017124">
    <property type="term" value="F:SH3 domain binding"/>
    <property type="evidence" value="ECO:0000353"/>
    <property type="project" value="BHF-UCL"/>
</dbReference>
<dbReference type="GO" id="GO:0007411">
    <property type="term" value="P:axon guidance"/>
    <property type="evidence" value="ECO:0000318"/>
    <property type="project" value="GO_Central"/>
</dbReference>
<dbReference type="GO" id="GO:0070593">
    <property type="term" value="P:dendrite self-avoidance"/>
    <property type="evidence" value="ECO:0000318"/>
    <property type="project" value="GO_Central"/>
</dbReference>
<dbReference type="GO" id="GO:0007156">
    <property type="term" value="P:homophilic cell adhesion via plasma membrane adhesion molecules"/>
    <property type="evidence" value="ECO:0000318"/>
    <property type="project" value="GO_Central"/>
</dbReference>
<dbReference type="GO" id="GO:0045214">
    <property type="term" value="P:sarcomere organization"/>
    <property type="evidence" value="ECO:0000315"/>
    <property type="project" value="BHF-UCL"/>
</dbReference>
<dbReference type="FunFam" id="2.60.40.10:FF:000256">
    <property type="entry name" value="myopalladin isoform X1"/>
    <property type="match status" value="1"/>
</dbReference>
<dbReference type="FunFam" id="2.60.40.10:FF:000399">
    <property type="entry name" value="myopalladin isoform X1"/>
    <property type="match status" value="1"/>
</dbReference>
<dbReference type="FunFam" id="2.60.40.10:FF:000032">
    <property type="entry name" value="palladin isoform X1"/>
    <property type="match status" value="1"/>
</dbReference>
<dbReference type="FunFam" id="2.60.40.10:FF:000761">
    <property type="entry name" value="palladin isoform X2"/>
    <property type="match status" value="1"/>
</dbReference>
<dbReference type="FunFam" id="2.60.40.10:FF:001108">
    <property type="entry name" value="palladin isoform X2"/>
    <property type="match status" value="1"/>
</dbReference>
<dbReference type="Gene3D" id="2.60.40.10">
    <property type="entry name" value="Immunoglobulins"/>
    <property type="match status" value="5"/>
</dbReference>
<dbReference type="InterPro" id="IPR007110">
    <property type="entry name" value="Ig-like_dom"/>
</dbReference>
<dbReference type="InterPro" id="IPR036179">
    <property type="entry name" value="Ig-like_dom_sf"/>
</dbReference>
<dbReference type="InterPro" id="IPR013783">
    <property type="entry name" value="Ig-like_fold"/>
</dbReference>
<dbReference type="InterPro" id="IPR013098">
    <property type="entry name" value="Ig_I-set"/>
</dbReference>
<dbReference type="InterPro" id="IPR003599">
    <property type="entry name" value="Ig_sub"/>
</dbReference>
<dbReference type="InterPro" id="IPR003598">
    <property type="entry name" value="Ig_sub2"/>
</dbReference>
<dbReference type="PANTHER" id="PTHR47633">
    <property type="entry name" value="IMMUNOGLOBULIN"/>
    <property type="match status" value="1"/>
</dbReference>
<dbReference type="Pfam" id="PF07679">
    <property type="entry name" value="I-set"/>
    <property type="match status" value="5"/>
</dbReference>
<dbReference type="SMART" id="SM00409">
    <property type="entry name" value="IG"/>
    <property type="match status" value="5"/>
</dbReference>
<dbReference type="SMART" id="SM00408">
    <property type="entry name" value="IGc2"/>
    <property type="match status" value="5"/>
</dbReference>
<dbReference type="SUPFAM" id="SSF48726">
    <property type="entry name" value="Immunoglobulin"/>
    <property type="match status" value="5"/>
</dbReference>
<dbReference type="PROSITE" id="PS50835">
    <property type="entry name" value="IG_LIKE"/>
    <property type="match status" value="5"/>
</dbReference>
<organism>
    <name type="scientific">Homo sapiens</name>
    <name type="common">Human</name>
    <dbReference type="NCBI Taxonomy" id="9606"/>
    <lineage>
        <taxon>Eukaryota</taxon>
        <taxon>Metazoa</taxon>
        <taxon>Chordata</taxon>
        <taxon>Craniata</taxon>
        <taxon>Vertebrata</taxon>
        <taxon>Euteleostomi</taxon>
        <taxon>Mammalia</taxon>
        <taxon>Eutheria</taxon>
        <taxon>Euarchontoglires</taxon>
        <taxon>Primates</taxon>
        <taxon>Haplorrhini</taxon>
        <taxon>Catarrhini</taxon>
        <taxon>Hominidae</taxon>
        <taxon>Homo</taxon>
    </lineage>
</organism>
<protein>
    <recommendedName>
        <fullName>Myopalladin</fullName>
    </recommendedName>
    <alternativeName>
        <fullName>145 kDa sarcomeric protein</fullName>
    </alternativeName>
</protein>
<name>MYPN_HUMAN</name>
<evidence type="ECO:0000250" key="1">
    <source>
        <dbReference type="UniProtKB" id="Q5DTJ9"/>
    </source>
</evidence>
<evidence type="ECO:0000255" key="2"/>
<evidence type="ECO:0000255" key="3">
    <source>
        <dbReference type="PROSITE-ProRule" id="PRU00114"/>
    </source>
</evidence>
<evidence type="ECO:0000256" key="4">
    <source>
        <dbReference type="SAM" id="MobiDB-lite"/>
    </source>
</evidence>
<evidence type="ECO:0000269" key="5">
    <source>
    </source>
</evidence>
<evidence type="ECO:0000269" key="6">
    <source>
    </source>
</evidence>
<evidence type="ECO:0000269" key="7">
    <source>
    </source>
</evidence>
<evidence type="ECO:0000269" key="8">
    <source>
    </source>
</evidence>
<evidence type="ECO:0000269" key="9">
    <source>
    </source>
</evidence>
<evidence type="ECO:0000269" key="10">
    <source>
    </source>
</evidence>
<evidence type="ECO:0000269" key="11">
    <source>
    </source>
</evidence>
<evidence type="ECO:0000269" key="12">
    <source>
    </source>
</evidence>
<evidence type="ECO:0000303" key="13">
    <source>
    </source>
</evidence>
<evidence type="ECO:0000305" key="14"/>
<evidence type="ECO:0007744" key="15">
    <source>
    </source>
</evidence>
<evidence type="ECO:0007744" key="16">
    <source>
    </source>
</evidence>
<evidence type="ECO:0007744" key="17">
    <source>
    </source>
</evidence>
<evidence type="ECO:0007744" key="18">
    <source>
    </source>
</evidence>
<gene>
    <name type="primary">MYPN</name>
    <name type="synonym">MYOP</name>
</gene>
<reference key="1">
    <citation type="journal article" date="2001" name="J. Cell Biol.">
        <title>Myopalladin, a novel 145-kilodalton sarcomeric protein with multiple roles in Z-disc and I-band protein assemblies.</title>
        <authorList>
            <person name="Bang M.-L."/>
            <person name="Mudry R.E."/>
            <person name="McElhinny A.S."/>
            <person name="Trombitas K."/>
            <person name="Geach A.J."/>
            <person name="Yamasaki R."/>
            <person name="Sorimachi H."/>
            <person name="Granzier H."/>
            <person name="Gregorio C.C."/>
            <person name="Labeit S."/>
        </authorList>
    </citation>
    <scope>NUCLEOTIDE SEQUENCE [MRNA] (ISOFORM 1)</scope>
    <scope>FUNCTION</scope>
    <scope>SUBCELLULAR LOCATION</scope>
    <scope>TISSUE SPECIFICITY</scope>
    <scope>INTERACTION WITH NEB; NEBL; ACTN2 AND CARP</scope>
    <scope>VARIANTS ASN-691; ASN-707 AND ARG-803</scope>
    <source>
        <tissue>Skeletal muscle</tissue>
    </source>
</reference>
<reference key="2">
    <citation type="journal article" date="2007" name="BMC Genomics">
        <title>The full-ORF clone resource of the German cDNA consortium.</title>
        <authorList>
            <person name="Bechtel S."/>
            <person name="Rosenfelder H."/>
            <person name="Duda A."/>
            <person name="Schmidt C.P."/>
            <person name="Ernst U."/>
            <person name="Wellenreuther R."/>
            <person name="Mehrle A."/>
            <person name="Schuster C."/>
            <person name="Bahr A."/>
            <person name="Bloecker H."/>
            <person name="Heubner D."/>
            <person name="Hoerlein A."/>
            <person name="Michel G."/>
            <person name="Wedler H."/>
            <person name="Koehrer K."/>
            <person name="Ottenwaelder B."/>
            <person name="Poustka A."/>
            <person name="Wiemann S."/>
            <person name="Schupp I."/>
        </authorList>
    </citation>
    <scope>NUCLEOTIDE SEQUENCE [LARGE SCALE MRNA] (ISOFORMS 1 AND 2)</scope>
    <source>
        <tissue>Skeletal muscle</tissue>
    </source>
</reference>
<reference key="3">
    <citation type="journal article" date="2004" name="Nature">
        <title>The DNA sequence and comparative analysis of human chromosome 10.</title>
        <authorList>
            <person name="Deloukas P."/>
            <person name="Earthrowl M.E."/>
            <person name="Grafham D.V."/>
            <person name="Rubenfield M."/>
            <person name="French L."/>
            <person name="Steward C.A."/>
            <person name="Sims S.K."/>
            <person name="Jones M.C."/>
            <person name="Searle S."/>
            <person name="Scott C."/>
            <person name="Howe K."/>
            <person name="Hunt S.E."/>
            <person name="Andrews T.D."/>
            <person name="Gilbert J.G.R."/>
            <person name="Swarbreck D."/>
            <person name="Ashurst J.L."/>
            <person name="Taylor A."/>
            <person name="Battles J."/>
            <person name="Bird C.P."/>
            <person name="Ainscough R."/>
            <person name="Almeida J.P."/>
            <person name="Ashwell R.I.S."/>
            <person name="Ambrose K.D."/>
            <person name="Babbage A.K."/>
            <person name="Bagguley C.L."/>
            <person name="Bailey J."/>
            <person name="Banerjee R."/>
            <person name="Bates K."/>
            <person name="Beasley H."/>
            <person name="Bray-Allen S."/>
            <person name="Brown A.J."/>
            <person name="Brown J.Y."/>
            <person name="Burford D.C."/>
            <person name="Burrill W."/>
            <person name="Burton J."/>
            <person name="Cahill P."/>
            <person name="Camire D."/>
            <person name="Carter N.P."/>
            <person name="Chapman J.C."/>
            <person name="Clark S.Y."/>
            <person name="Clarke G."/>
            <person name="Clee C.M."/>
            <person name="Clegg S."/>
            <person name="Corby N."/>
            <person name="Coulson A."/>
            <person name="Dhami P."/>
            <person name="Dutta I."/>
            <person name="Dunn M."/>
            <person name="Faulkner L."/>
            <person name="Frankish A."/>
            <person name="Frankland J.A."/>
            <person name="Garner P."/>
            <person name="Garnett J."/>
            <person name="Gribble S."/>
            <person name="Griffiths C."/>
            <person name="Grocock R."/>
            <person name="Gustafson E."/>
            <person name="Hammond S."/>
            <person name="Harley J.L."/>
            <person name="Hart E."/>
            <person name="Heath P.D."/>
            <person name="Ho T.P."/>
            <person name="Hopkins B."/>
            <person name="Horne J."/>
            <person name="Howden P.J."/>
            <person name="Huckle E."/>
            <person name="Hynds C."/>
            <person name="Johnson C."/>
            <person name="Johnson D."/>
            <person name="Kana A."/>
            <person name="Kay M."/>
            <person name="Kimberley A.M."/>
            <person name="Kershaw J.K."/>
            <person name="Kokkinaki M."/>
            <person name="Laird G.K."/>
            <person name="Lawlor S."/>
            <person name="Lee H.M."/>
            <person name="Leongamornlert D.A."/>
            <person name="Laird G."/>
            <person name="Lloyd C."/>
            <person name="Lloyd D.M."/>
            <person name="Loveland J."/>
            <person name="Lovell J."/>
            <person name="McLaren S."/>
            <person name="McLay K.E."/>
            <person name="McMurray A."/>
            <person name="Mashreghi-Mohammadi M."/>
            <person name="Matthews L."/>
            <person name="Milne S."/>
            <person name="Nickerson T."/>
            <person name="Nguyen M."/>
            <person name="Overton-Larty E."/>
            <person name="Palmer S.A."/>
            <person name="Pearce A.V."/>
            <person name="Peck A.I."/>
            <person name="Pelan S."/>
            <person name="Phillimore B."/>
            <person name="Porter K."/>
            <person name="Rice C.M."/>
            <person name="Rogosin A."/>
            <person name="Ross M.T."/>
            <person name="Sarafidou T."/>
            <person name="Sehra H.K."/>
            <person name="Shownkeen R."/>
            <person name="Skuce C.D."/>
            <person name="Smith M."/>
            <person name="Standring L."/>
            <person name="Sycamore N."/>
            <person name="Tester J."/>
            <person name="Thorpe A."/>
            <person name="Torcasso W."/>
            <person name="Tracey A."/>
            <person name="Tromans A."/>
            <person name="Tsolas J."/>
            <person name="Wall M."/>
            <person name="Walsh J."/>
            <person name="Wang H."/>
            <person name="Weinstock K."/>
            <person name="West A.P."/>
            <person name="Willey D.L."/>
            <person name="Whitehead S.L."/>
            <person name="Wilming L."/>
            <person name="Wray P.W."/>
            <person name="Young L."/>
            <person name="Chen Y."/>
            <person name="Lovering R.C."/>
            <person name="Moschonas N.K."/>
            <person name="Siebert R."/>
            <person name="Fechtel K."/>
            <person name="Bentley D."/>
            <person name="Durbin R.M."/>
            <person name="Hubbard T."/>
            <person name="Doucette-Stamm L."/>
            <person name="Beck S."/>
            <person name="Smith D.R."/>
            <person name="Rogers J."/>
        </authorList>
    </citation>
    <scope>NUCLEOTIDE SEQUENCE [LARGE SCALE GENOMIC DNA]</scope>
</reference>
<reference key="4">
    <citation type="journal article" date="2004" name="Nat. Genet.">
        <title>Complete sequencing and characterization of 21,243 full-length human cDNAs.</title>
        <authorList>
            <person name="Ota T."/>
            <person name="Suzuki Y."/>
            <person name="Nishikawa T."/>
            <person name="Otsuki T."/>
            <person name="Sugiyama T."/>
            <person name="Irie R."/>
            <person name="Wakamatsu A."/>
            <person name="Hayashi K."/>
            <person name="Sato H."/>
            <person name="Nagai K."/>
            <person name="Kimura K."/>
            <person name="Makita H."/>
            <person name="Sekine M."/>
            <person name="Obayashi M."/>
            <person name="Nishi T."/>
            <person name="Shibahara T."/>
            <person name="Tanaka T."/>
            <person name="Ishii S."/>
            <person name="Yamamoto J."/>
            <person name="Saito K."/>
            <person name="Kawai Y."/>
            <person name="Isono Y."/>
            <person name="Nakamura Y."/>
            <person name="Nagahari K."/>
            <person name="Murakami K."/>
            <person name="Yasuda T."/>
            <person name="Iwayanagi T."/>
            <person name="Wagatsuma M."/>
            <person name="Shiratori A."/>
            <person name="Sudo H."/>
            <person name="Hosoiri T."/>
            <person name="Kaku Y."/>
            <person name="Kodaira H."/>
            <person name="Kondo H."/>
            <person name="Sugawara M."/>
            <person name="Takahashi M."/>
            <person name="Kanda K."/>
            <person name="Yokoi T."/>
            <person name="Furuya T."/>
            <person name="Kikkawa E."/>
            <person name="Omura Y."/>
            <person name="Abe K."/>
            <person name="Kamihara K."/>
            <person name="Katsuta N."/>
            <person name="Sato K."/>
            <person name="Tanikawa M."/>
            <person name="Yamazaki M."/>
            <person name="Ninomiya K."/>
            <person name="Ishibashi T."/>
            <person name="Yamashita H."/>
            <person name="Murakawa K."/>
            <person name="Fujimori K."/>
            <person name="Tanai H."/>
            <person name="Kimata M."/>
            <person name="Watanabe M."/>
            <person name="Hiraoka S."/>
            <person name="Chiba Y."/>
            <person name="Ishida S."/>
            <person name="Ono Y."/>
            <person name="Takiguchi S."/>
            <person name="Watanabe S."/>
            <person name="Yosida M."/>
            <person name="Hotuta T."/>
            <person name="Kusano J."/>
            <person name="Kanehori K."/>
            <person name="Takahashi-Fujii A."/>
            <person name="Hara H."/>
            <person name="Tanase T.-O."/>
            <person name="Nomura Y."/>
            <person name="Togiya S."/>
            <person name="Komai F."/>
            <person name="Hara R."/>
            <person name="Takeuchi K."/>
            <person name="Arita M."/>
            <person name="Imose N."/>
            <person name="Musashino K."/>
            <person name="Yuuki H."/>
            <person name="Oshima A."/>
            <person name="Sasaki N."/>
            <person name="Aotsuka S."/>
            <person name="Yoshikawa Y."/>
            <person name="Matsunawa H."/>
            <person name="Ichihara T."/>
            <person name="Shiohata N."/>
            <person name="Sano S."/>
            <person name="Moriya S."/>
            <person name="Momiyama H."/>
            <person name="Satoh N."/>
            <person name="Takami S."/>
            <person name="Terashima Y."/>
            <person name="Suzuki O."/>
            <person name="Nakagawa S."/>
            <person name="Senoh A."/>
            <person name="Mizoguchi H."/>
            <person name="Goto Y."/>
            <person name="Shimizu F."/>
            <person name="Wakebe H."/>
            <person name="Hishigaki H."/>
            <person name="Watanabe T."/>
            <person name="Sugiyama A."/>
            <person name="Takemoto M."/>
            <person name="Kawakami B."/>
            <person name="Yamazaki M."/>
            <person name="Watanabe K."/>
            <person name="Kumagai A."/>
            <person name="Itakura S."/>
            <person name="Fukuzumi Y."/>
            <person name="Fujimori Y."/>
            <person name="Komiyama M."/>
            <person name="Tashiro H."/>
            <person name="Tanigami A."/>
            <person name="Fujiwara T."/>
            <person name="Ono T."/>
            <person name="Yamada K."/>
            <person name="Fujii Y."/>
            <person name="Ozaki K."/>
            <person name="Hirao M."/>
            <person name="Ohmori Y."/>
            <person name="Kawabata A."/>
            <person name="Hikiji T."/>
            <person name="Kobatake N."/>
            <person name="Inagaki H."/>
            <person name="Ikema Y."/>
            <person name="Okamoto S."/>
            <person name="Okitani R."/>
            <person name="Kawakami T."/>
            <person name="Noguchi S."/>
            <person name="Itoh T."/>
            <person name="Shigeta K."/>
            <person name="Senba T."/>
            <person name="Matsumura K."/>
            <person name="Nakajima Y."/>
            <person name="Mizuno T."/>
            <person name="Morinaga M."/>
            <person name="Sasaki M."/>
            <person name="Togashi T."/>
            <person name="Oyama M."/>
            <person name="Hata H."/>
            <person name="Watanabe M."/>
            <person name="Komatsu T."/>
            <person name="Mizushima-Sugano J."/>
            <person name="Satoh T."/>
            <person name="Shirai Y."/>
            <person name="Takahashi Y."/>
            <person name="Nakagawa K."/>
            <person name="Okumura K."/>
            <person name="Nagase T."/>
            <person name="Nomura N."/>
            <person name="Kikuchi H."/>
            <person name="Masuho Y."/>
            <person name="Yamashita R."/>
            <person name="Nakai K."/>
            <person name="Yada T."/>
            <person name="Nakamura Y."/>
            <person name="Ohara O."/>
            <person name="Isogai T."/>
            <person name="Sugano S."/>
        </authorList>
    </citation>
    <scope>NUCLEOTIDE SEQUENCE [LARGE SCALE MRNA] OF 1-494 (ISOFORM 1)</scope>
    <source>
        <tissue>Embryo</tissue>
    </source>
</reference>
<reference key="5">
    <citation type="journal article" date="2002" name="FEBS Lett.">
        <title>Interaction of nebulin SH3 domain with titin PEVK and myopalladin: implications for the signaling and assembly role of titin and nebulin.</title>
        <authorList>
            <person name="Ma K."/>
            <person name="Wang K."/>
        </authorList>
    </citation>
    <scope>INTERACTION WITH TTN</scope>
</reference>
<reference key="6">
    <citation type="journal article" date="2008" name="Mol. Cell">
        <title>Kinase-selective enrichment enables quantitative phosphoproteomics of the kinome across the cell cycle.</title>
        <authorList>
            <person name="Daub H."/>
            <person name="Olsen J.V."/>
            <person name="Bairlein M."/>
            <person name="Gnad F."/>
            <person name="Oppermann F.S."/>
            <person name="Korner R."/>
            <person name="Greff Z."/>
            <person name="Keri G."/>
            <person name="Stemmann O."/>
            <person name="Mann M."/>
        </authorList>
    </citation>
    <scope>PHOSPHORYLATION [LARGE SCALE ANALYSIS] AT SER-928</scope>
    <scope>IDENTIFICATION BY MASS SPECTROMETRY [LARGE SCALE ANALYSIS]</scope>
    <source>
        <tissue>Cervix carcinoma</tissue>
    </source>
</reference>
<reference key="7">
    <citation type="journal article" date="2008" name="Proc. Natl. Acad. Sci. U.S.A.">
        <title>A quantitative atlas of mitotic phosphorylation.</title>
        <authorList>
            <person name="Dephoure N."/>
            <person name="Zhou C."/>
            <person name="Villen J."/>
            <person name="Beausoleil S.A."/>
            <person name="Bakalarski C.E."/>
            <person name="Elledge S.J."/>
            <person name="Gygi S.P."/>
        </authorList>
    </citation>
    <scope>PHOSPHORYLATION [LARGE SCALE ANALYSIS] AT THR-251; SER-759; SER-813; SER-818 AND SER-928</scope>
    <scope>IDENTIFICATION BY MASS SPECTROMETRY [LARGE SCALE ANALYSIS]</scope>
    <source>
        <tissue>Cervix carcinoma</tissue>
    </source>
</reference>
<reference key="8">
    <citation type="journal article" date="2010" name="Sci. Signal.">
        <title>Quantitative phosphoproteomics reveals widespread full phosphorylation site occupancy during mitosis.</title>
        <authorList>
            <person name="Olsen J.V."/>
            <person name="Vermeulen M."/>
            <person name="Santamaria A."/>
            <person name="Kumar C."/>
            <person name="Miller M.L."/>
            <person name="Jensen L.J."/>
            <person name="Gnad F."/>
            <person name="Cox J."/>
            <person name="Jensen T.S."/>
            <person name="Nigg E.A."/>
            <person name="Brunak S."/>
            <person name="Mann M."/>
        </authorList>
    </citation>
    <scope>PHOSPHORYLATION [LARGE SCALE ANALYSIS] AT SER-101; SER-813 AND SER-928</scope>
    <scope>IDENTIFICATION BY MASS SPECTROMETRY [LARGE SCALE ANALYSIS]</scope>
    <source>
        <tissue>Cervix carcinoma</tissue>
    </source>
</reference>
<reference key="9">
    <citation type="journal article" date="2011" name="BMC Syst. Biol.">
        <title>Initial characterization of the human central proteome.</title>
        <authorList>
            <person name="Burkard T.R."/>
            <person name="Planyavsky M."/>
            <person name="Kaupe I."/>
            <person name="Breitwieser F.P."/>
            <person name="Buerckstuemmer T."/>
            <person name="Bennett K.L."/>
            <person name="Superti-Furga G."/>
            <person name="Colinge J."/>
        </authorList>
    </citation>
    <scope>IDENTIFICATION BY MASS SPECTROMETRY [LARGE SCALE ANALYSIS]</scope>
</reference>
<reference key="10">
    <citation type="journal article" date="2012" name="Hum. Mol. Genet.">
        <title>Molecular basis for clinical heterogeneity in inherited cardiomyopathies due to myopalladin mutations.</title>
        <authorList>
            <person name="Purevjav E."/>
            <person name="Arimura T."/>
            <person name="Augustin S."/>
            <person name="Huby A.C."/>
            <person name="Takagi K."/>
            <person name="Nunoda S."/>
            <person name="Kearney D.L."/>
            <person name="Taylor M.D."/>
            <person name="Terasaki F."/>
            <person name="Bos J.M."/>
            <person name="Ommen S.R."/>
            <person name="Shibata H."/>
            <person name="Takahashi M."/>
            <person name="Itoh-Satoh M."/>
            <person name="McKenna W.J."/>
            <person name="Murphy R.T."/>
            <person name="Labeit S."/>
            <person name="Yamanaka Y."/>
            <person name="Machida N."/>
            <person name="Park J.E."/>
            <person name="Alexander P.M."/>
            <person name="Weintraub R.G."/>
            <person name="Kitaura Y."/>
            <person name="Ackerman M.J."/>
            <person name="Kimura A."/>
            <person name="Towbin J.A."/>
        </authorList>
    </citation>
    <scope>INVOLVEMENT IN RCM4</scope>
    <scope>VARIANTS CMH22 CYS-20; ARG-153; GLU-217; ALA-410; THR-841; LEU-1112 AND PRO-1265</scope>
    <scope>VARIANTS CMD1KK CYS-20; VAL-213; PHE-339; THR-611; THR-882 AND LEU-954</scope>
    <scope>VARIANTS ALA-393; LYS-467; LYS-614; LEU-628; ASN-691; ASN-707; ARG-803; ARG-804; GLN-955; THR-1135; ILE-1161 AND GLY-1306</scope>
    <scope>CHARACTERIZATION OF VARIANT CMH22 CYS-20</scope>
</reference>
<reference key="11">
    <citation type="journal article" date="2013" name="J. Proteome Res.">
        <title>Toward a comprehensive characterization of a human cancer cell phosphoproteome.</title>
        <authorList>
            <person name="Zhou H."/>
            <person name="Di Palma S."/>
            <person name="Preisinger C."/>
            <person name="Peng M."/>
            <person name="Polat A.N."/>
            <person name="Heck A.J."/>
            <person name="Mohammed S."/>
        </authorList>
    </citation>
    <scope>PHOSPHORYLATION [LARGE SCALE ANALYSIS] AT SER-644; SER-813; SER-867; SER-907 AND SER-928</scope>
    <scope>IDENTIFICATION BY MASS SPECTROMETRY [LARGE SCALE ANALYSIS]</scope>
    <source>
        <tissue>Cervix carcinoma</tissue>
    </source>
</reference>
<reference key="12">
    <citation type="journal article" date="2017" name="Am. J. Hum. Genet.">
        <title>Biallelic Mutations in MYPN, Encoding Myopalladin, Are Associated with Childhood-Onset, Slowly Progressive Nemaline Myopathy.</title>
        <authorList>
            <person name="Miyatake S."/>
            <person name="Mitsuhashi S."/>
            <person name="Hayashi Y.K."/>
            <person name="Purevjav E."/>
            <person name="Nishikawa A."/>
            <person name="Koshimizu E."/>
            <person name="Suzuki M."/>
            <person name="Yatabe K."/>
            <person name="Tanaka Y."/>
            <person name="Ogata K."/>
            <person name="Kuru S."/>
            <person name="Shiina M."/>
            <person name="Tsurusaki Y."/>
            <person name="Nakashima M."/>
            <person name="Mizuguchi T."/>
            <person name="Miyake N."/>
            <person name="Saitsu H."/>
            <person name="Ogata K."/>
            <person name="Kawai M."/>
            <person name="Towbin J."/>
            <person name="Nonaka I."/>
            <person name="Nishino I."/>
            <person name="Matsumoto N."/>
        </authorList>
    </citation>
    <scope>INVOLVEMENT IN CMYO24</scope>
    <scope>SUBCELLULAR LOCATION</scope>
</reference>
<reference key="13">
    <citation type="journal article" date="2008" name="Cardiovasc. Res.">
        <title>Mutations in the Z-band protein myopalladin gene and idiopathic dilated cardiomyopathy.</title>
        <authorList>
            <person name="Duboscq-Bidot L."/>
            <person name="Xu P."/>
            <person name="Charron P."/>
            <person name="Neyroud N."/>
            <person name="Dilanian G."/>
            <person name="Millaire A."/>
            <person name="Bors V."/>
            <person name="Komajda M."/>
            <person name="Villard E."/>
        </authorList>
    </citation>
    <scope>VARIANTS CMD1KK HIS-1088; LEU-1112 AND MET-1195</scope>
    <scope>CHARACTERIZATION OF VARIANTS CMD1KK LEU-1112 AND MET-1195</scope>
</reference>
<reference key="14">
    <citation type="journal article" date="2013" name="Eur. J. Hum. Genet.">
        <title>Novel mutations in the sarcomeric protein myopalladin in patients with dilated cardiomyopathy.</title>
        <authorList>
            <consortium name="German Competence Network Heart Failure"/>
            <person name="Meyer T."/>
            <person name="Ruppert V."/>
            <person name="Ackermann S."/>
            <person name="Richter A."/>
            <person name="Perrot A."/>
            <person name="Sperling S.R."/>
            <person name="Posch M.G."/>
            <person name="Maisch B."/>
            <person name="Pankuweit S."/>
        </authorList>
    </citation>
    <scope>VARIANTS CMD1KK TRP-955 AND LEU-961</scope>
    <scope>VARIANTS ALA-393; LEU-628; ASN-691; ASN-707; ARG-803 AND THR-1135</scope>
</reference>
<reference key="15">
    <citation type="journal article" date="2015" name="Proc. Natl. Acad. Sci. U.S.A.">
        <title>Neomorphic effects of recurrent somatic mutations in Yin Yang 1 in insulin-producing adenomas.</title>
        <authorList>
            <person name="Cromer M.K."/>
            <person name="Choi M."/>
            <person name="Nelson-Williams C."/>
            <person name="Fonseca A.L."/>
            <person name="Kunstman J.W."/>
            <person name="Korah R.M."/>
            <person name="Overton J.D."/>
            <person name="Mane S."/>
            <person name="Kenney B."/>
            <person name="Malchoff C.D."/>
            <person name="Stalberg P."/>
            <person name="Akerstroem G."/>
            <person name="Westin G."/>
            <person name="Hellman P."/>
            <person name="Carling T."/>
            <person name="Bjoerklund P."/>
            <person name="Lifton R.P."/>
        </authorList>
    </citation>
    <scope>VARIANT SER-698</scope>
</reference>
<reference key="16">
    <citation type="journal article" date="2016" name="Nature">
        <title>Analysis of protein-coding genetic variation in 60,706 humans.</title>
        <authorList>
            <consortium name="Exome Aggregation Consortium"/>
            <person name="Lek M."/>
            <person name="Karczewski K.J."/>
            <person name="Minikel E.V."/>
            <person name="Samocha K.E."/>
            <person name="Banks E."/>
            <person name="Fennell T."/>
            <person name="O'Donnell-Luria A.H."/>
            <person name="Ware J.S."/>
            <person name="Hill A.J."/>
            <person name="Cummings B.B."/>
            <person name="Tukiainen T."/>
            <person name="Birnbaum D.P."/>
            <person name="Kosmicki J.A."/>
            <person name="Duncan L.E."/>
            <person name="Estrada K."/>
            <person name="Zhao F."/>
            <person name="Zou J."/>
            <person name="Pierce-Hoffman E."/>
            <person name="Berghout J."/>
            <person name="Cooper D.N."/>
            <person name="Deflaux N."/>
            <person name="DePristo M."/>
            <person name="Do R."/>
            <person name="Flannick J."/>
            <person name="Fromer M."/>
            <person name="Gauthier L."/>
            <person name="Goldstein J."/>
            <person name="Gupta N."/>
            <person name="Howrigan D."/>
            <person name="Kiezun A."/>
            <person name="Kurki M.I."/>
            <person name="Moonshine A.L."/>
            <person name="Natarajan P."/>
            <person name="Orozco L."/>
            <person name="Peloso G.M."/>
            <person name="Poplin R."/>
            <person name="Rivas M.A."/>
            <person name="Ruano-Rubio V."/>
            <person name="Rose S.A."/>
            <person name="Ruderfer D.M."/>
            <person name="Shakir K."/>
            <person name="Stenson P.D."/>
            <person name="Stevens C."/>
            <person name="Thomas B.P."/>
            <person name="Tiao G."/>
            <person name="Tusie-Luna M.T."/>
            <person name="Weisburd B."/>
            <person name="Won H.H."/>
            <person name="Yu D."/>
            <person name="Altshuler D.M."/>
            <person name="Ardissino D."/>
            <person name="Boehnke M."/>
            <person name="Danesh J."/>
            <person name="Donnelly S."/>
            <person name="Elosua R."/>
            <person name="Florez J.C."/>
            <person name="Gabriel S.B."/>
            <person name="Getz G."/>
            <person name="Glatt S.J."/>
            <person name="Hultman C.M."/>
            <person name="Kathiresan S."/>
            <person name="Laakso M."/>
            <person name="McCarroll S."/>
            <person name="McCarthy M.I."/>
            <person name="McGovern D."/>
            <person name="McPherson R."/>
            <person name="Neale B.M."/>
            <person name="Palotie A."/>
            <person name="Purcell S.M."/>
            <person name="Saleheen D."/>
            <person name="Scharf J.M."/>
            <person name="Sklar P."/>
            <person name="Sullivan P.F."/>
            <person name="Tuomilehto J."/>
            <person name="Tsuang M.T."/>
            <person name="Watkins H.C."/>
            <person name="Wilson J.G."/>
            <person name="Daly M.J."/>
            <person name="MacArthur D.G."/>
        </authorList>
    </citation>
    <scope>VARIANT ILE-1161</scope>
</reference>
<proteinExistence type="evidence at protein level"/>
<sequence>MQDDSIEASTSISQLLRESYLAETRHRGNNERSRAEPSSNPCHFGSPSGAAEGGGGQDDLPDLSAFLSQEELDESVNLARLAINYDPLEKADETQARKRLSPDQMKHSPNLSFEPNFCQDNPRSPTSSKESPQEAKRPQYCSETQSKKVFLNKAADFIEELSSLFKSHSSKRIRPRACKNHKSKLESQNKVMQENSSSFSDLSERRERSSVPIPIPADTRDNEVNHALEQQEAKRREAEQAASEAAGGDTTPGSSPSSLYYEEPLGQPPRFTQKLRSREVPEGTRVQLDCIVVGIPPPQVRWYCEGKELENSPDIHIVQAGNLHSLTIAEAFEEDTGRYSCFASNIYGTDSTSAEIYIEGVSSSDSEGDPNKEEMNRIQKPNEVSSPPTTSAVIPPAVPQAQHLVAQPRVATIQQCQSPTNYLQGLDGKPIIAAPVFTKMLQNLSASEGQLVVFECRVKGAPSPKVEWYREGTLIEDSPDFRILQKKPRSMAEPEEICTLVIAEVFAEDSGCFTCTASNKYGTVSSIAQLHVRGNEDLSNNGSLHSANSTTNLAAIEPQPSPPHSEPPSVEQPPKPKLEGVLVNHNEPRSSSRIGLRVHFNLPEDDKGSEASSEAGVVTTRQTRPDSFQERFNGQATKTPEPSSPVKEPPPVLAKPKLDSTQLQQLHNQVLLEQHQLQNPPPSSPKEFPFSMTVLNSNAPPAVTTSSKQVKAPSSQTFSLARPKYFFPSTNTTAATVAPSSSPVFTLSSTPQTIQRTVSKESLLVSHPSVQTKSPGGLSIQNEPLPPGPTEPTPPPFTFSIPSGNQFQPRCVSPIPVSPTSRIQNPVAFLSSVLPSLPAIPPTNAMGLPRSAPSMPSQGLAKKNTKSPQPVNDDNIRETKNAVIRDLGKKITFSDVRPNQQEYKISSFEQRLMNEIEFRLERTPVDESDDEIQHDEIPTGKCIAPIFDKRLKHFRVTEGSPVTFTCKIVGIPVPKVYWFKDGKQISKRNEHCKMRREGDGTCSLHIESTTSDDDGNYTIMAANPQGRISCSGHLMVQSLPIRSRLTSAGQSHRGRSRVQERDKEPLQERFFRPHFLQAPGDMVAHEGRLCRLDCKVSGLPPPELTWLLNGQPVLPDASHKMLVRETGVHSLLIDPLTQRDAGTYKCIATNKTGQNSFSLELSVVAKEVKKAPVILEKLQNCGVPEGHPVRLECRVIGMPPPVFYWKKDNETIPCTRERISMHQDTTGYACLLIQPAKKSDAGWYTLSAKNEAGIVSCTARLDIYAQWHHQIPPPMSVRPSGSRYGSLTSKGLDIFSAFSSMESTMVYSCSSRSVVESDEL</sequence>
<feature type="chain" id="PRO_0000240489" description="Myopalladin">
    <location>
        <begin position="1"/>
        <end position="1320"/>
    </location>
</feature>
<feature type="domain" description="Ig-like 1">
    <location>
        <begin position="269"/>
        <end position="359"/>
    </location>
</feature>
<feature type="domain" description="Ig-like 2">
    <location>
        <begin position="435"/>
        <end position="531"/>
    </location>
</feature>
<feature type="domain" description="Ig-like 3">
    <location>
        <begin position="945"/>
        <end position="1029"/>
    </location>
</feature>
<feature type="domain" description="Ig-like 4">
    <location>
        <begin position="1073"/>
        <end position="1162"/>
    </location>
</feature>
<feature type="domain" description="Ig-like 5">
    <location>
        <begin position="1172"/>
        <end position="1262"/>
    </location>
</feature>
<feature type="region of interest" description="Interaction with CARP" evidence="5">
    <location>
        <begin position="1"/>
        <end position="522"/>
    </location>
</feature>
<feature type="region of interest" description="Disordered" evidence="4">
    <location>
        <begin position="19"/>
        <end position="68"/>
    </location>
</feature>
<feature type="region of interest" description="Disordered" evidence="4">
    <location>
        <begin position="84"/>
        <end position="145"/>
    </location>
</feature>
<feature type="region of interest" description="Disordered" evidence="4">
    <location>
        <begin position="165"/>
        <end position="271"/>
    </location>
</feature>
<feature type="region of interest" description="Disordered" evidence="4">
    <location>
        <begin position="554"/>
        <end position="655"/>
    </location>
</feature>
<feature type="region of interest" description="Interaction with NEB" evidence="5">
    <location>
        <begin position="649"/>
        <end position="677"/>
    </location>
</feature>
<feature type="region of interest" description="Disordered" evidence="4">
    <location>
        <begin position="763"/>
        <end position="805"/>
    </location>
</feature>
<feature type="region of interest" description="Disordered" evidence="4">
    <location>
        <begin position="844"/>
        <end position="876"/>
    </location>
</feature>
<feature type="region of interest" description="Interaction with ACTN">
    <location>
        <begin position="945"/>
        <end position="1320"/>
    </location>
</feature>
<feature type="coiled-coil region" evidence="2">
    <location>
        <begin position="219"/>
        <end position="248"/>
    </location>
</feature>
<feature type="compositionally biased region" description="Basic and acidic residues" evidence="4">
    <location>
        <begin position="23"/>
        <end position="35"/>
    </location>
</feature>
<feature type="compositionally biased region" description="Basic and acidic residues" evidence="4">
    <location>
        <begin position="87"/>
        <end position="106"/>
    </location>
</feature>
<feature type="compositionally biased region" description="Polar residues" evidence="4">
    <location>
        <begin position="107"/>
        <end position="130"/>
    </location>
</feature>
<feature type="compositionally biased region" description="Basic residues" evidence="4">
    <location>
        <begin position="168"/>
        <end position="182"/>
    </location>
</feature>
<feature type="compositionally biased region" description="Polar residues" evidence="4">
    <location>
        <begin position="186"/>
        <end position="201"/>
    </location>
</feature>
<feature type="compositionally biased region" description="Basic and acidic residues" evidence="4">
    <location>
        <begin position="218"/>
        <end position="239"/>
    </location>
</feature>
<feature type="compositionally biased region" description="Low complexity" evidence="4">
    <location>
        <begin position="240"/>
        <end position="258"/>
    </location>
</feature>
<feature type="compositionally biased region" description="Pro residues" evidence="4">
    <location>
        <begin position="559"/>
        <end position="575"/>
    </location>
</feature>
<feature type="compositionally biased region" description="Polar residues" evidence="4">
    <location>
        <begin position="768"/>
        <end position="782"/>
    </location>
</feature>
<feature type="compositionally biased region" description="Pro residues" evidence="4">
    <location>
        <begin position="784"/>
        <end position="797"/>
    </location>
</feature>
<feature type="modified residue" description="Phosphoserine" evidence="17">
    <location>
        <position position="101"/>
    </location>
</feature>
<feature type="modified residue" description="Phosphoserine" evidence="1">
    <location>
        <position position="131"/>
    </location>
</feature>
<feature type="modified residue" description="Phosphothreonine" evidence="15">
    <location>
        <position position="251"/>
    </location>
</feature>
<feature type="modified residue" description="Phosphoserine" evidence="18">
    <location>
        <position position="644"/>
    </location>
</feature>
<feature type="modified residue" description="Phosphoserine" evidence="15">
    <location>
        <position position="759"/>
    </location>
</feature>
<feature type="modified residue" description="Phosphoserine" evidence="15 17 18">
    <location>
        <position position="813"/>
    </location>
</feature>
<feature type="modified residue" description="Phosphoserine" evidence="15">
    <location>
        <position position="818"/>
    </location>
</feature>
<feature type="modified residue" description="Phosphoserine" evidence="18">
    <location>
        <position position="867"/>
    </location>
</feature>
<feature type="modified residue" description="Phosphoserine" evidence="18">
    <location>
        <position position="907"/>
    </location>
</feature>
<feature type="modified residue" description="Phosphoserine" evidence="15 16 17 18">
    <location>
        <position position="928"/>
    </location>
</feature>
<feature type="disulfide bond" evidence="3">
    <location>
        <begin position="290"/>
        <end position="341"/>
    </location>
</feature>
<feature type="disulfide bond" evidence="3">
    <location>
        <begin position="456"/>
        <end position="515"/>
    </location>
</feature>
<feature type="disulfide bond" evidence="3">
    <location>
        <begin position="1094"/>
        <end position="1146"/>
    </location>
</feature>
<feature type="splice variant" id="VSP_019384" description="In isoform 2." evidence="13">
    <location>
        <begin position="1"/>
        <end position="275"/>
    </location>
</feature>
<feature type="splice variant" id="VSP_019385" description="In isoform 2." evidence="13">
    <original>RSREVPEGTRVQLDCIVVGIPPPQVR</original>
    <variation>MLTVQVKTSSAIELPDSLAFLWIIPM</variation>
    <location>
        <begin position="276"/>
        <end position="301"/>
    </location>
</feature>
<feature type="sequence variant" id="VAR_069642" description="In CMH22 and CMD1KK; perturbs MYPN nuclear shuttling and leads to disruption of intercalated disks; dbSNP:rs140148105." evidence="8">
    <original>Y</original>
    <variation>C</variation>
    <location>
        <position position="20"/>
    </location>
</feature>
<feature type="sequence variant" id="VAR_069643" description="In CMH22; dbSNP:rs199476401." evidence="8">
    <original>K</original>
    <variation>R</variation>
    <location>
        <position position="153"/>
    </location>
</feature>
<feature type="sequence variant" id="VAR_069644" description="In CMD1KK; dbSNP:rs199476402." evidence="8">
    <original>I</original>
    <variation>V</variation>
    <location>
        <position position="213"/>
    </location>
</feature>
<feature type="sequence variant" id="VAR_069645" description="In CMH22; dbSNP:rs199476403." evidence="8">
    <original>A</original>
    <variation>E</variation>
    <location>
        <position position="217"/>
    </location>
</feature>
<feature type="sequence variant" id="VAR_069646" description="In CMD1KK; dbSNP:rs199476404." evidence="8">
    <original>Y</original>
    <variation>F</variation>
    <location>
        <position position="339"/>
    </location>
</feature>
<feature type="sequence variant" id="VAR_049911" description="In dbSNP:rs11596653." evidence="8 9">
    <original>V</original>
    <variation>A</variation>
    <location>
        <position position="393"/>
    </location>
</feature>
<feature type="sequence variant" id="VAR_069647" description="In CMH22; dbSNP:rs199476406." evidence="8">
    <original>V</original>
    <variation>A</variation>
    <location>
        <position position="410"/>
    </location>
</feature>
<feature type="sequence variant" id="VAR_069648" description="In dbSNP:rs74143030." evidence="8">
    <original>E</original>
    <variation>K</variation>
    <location>
        <position position="467"/>
    </location>
</feature>
<feature type="sequence variant" id="VAR_069649" description="In CMD1KK; dbSNP:rs199476409." evidence="8">
    <original>A</original>
    <variation>T</variation>
    <location>
        <position position="611"/>
    </location>
</feature>
<feature type="sequence variant" id="VAR_069650" description="In dbSNP:rs143338091." evidence="8">
    <original>E</original>
    <variation>K</variation>
    <location>
        <position position="614"/>
    </location>
</feature>
<feature type="sequence variant" id="VAR_049912" description="In dbSNP:rs10823148." evidence="8 9">
    <original>F</original>
    <variation>L</variation>
    <location>
        <position position="628"/>
    </location>
</feature>
<feature type="sequence variant" id="VAR_026727" description="In dbSNP:rs10997975." evidence="5 8 9">
    <original>S</original>
    <variation>N</variation>
    <location>
        <position position="691"/>
    </location>
</feature>
<feature type="sequence variant" id="VAR_074186" description="In dbSNP:rs181355189." evidence="10">
    <original>N</original>
    <variation>S</variation>
    <location>
        <position position="698"/>
    </location>
</feature>
<feature type="sequence variant" id="VAR_026728" description="In dbSNP:rs7916821." evidence="5 8 9">
    <original>S</original>
    <variation>N</variation>
    <location>
        <position position="707"/>
    </location>
</feature>
<feature type="sequence variant" id="VAR_026729" description="In dbSNP:rs3814182." evidence="5 8 9">
    <original>S</original>
    <variation>R</variation>
    <location>
        <position position="803"/>
    </location>
</feature>
<feature type="sequence variant" id="VAR_069651" description="In dbSNP:rs62620248." evidence="8">
    <original>G</original>
    <variation>R</variation>
    <location>
        <position position="804"/>
    </location>
</feature>
<feature type="sequence variant" id="VAR_069652" description="In CMH22; dbSNP:rs199476410." evidence="8">
    <original>P</original>
    <variation>T</variation>
    <location>
        <position position="841"/>
    </location>
</feature>
<feature type="sequence variant" id="VAR_069653" description="In CMD1KK; dbSNP:rs199476411." evidence="8">
    <original>A</original>
    <variation>T</variation>
    <location>
        <position position="882"/>
    </location>
</feature>
<feature type="sequence variant" id="VAR_069654" description="In CMD1KK; dbSNP:rs199476413." evidence="8">
    <original>F</original>
    <variation>L</variation>
    <location>
        <position position="954"/>
    </location>
</feature>
<feature type="sequence variant" id="VAR_069655" description="In dbSNP:rs199476414." evidence="8">
    <original>R</original>
    <variation>Q</variation>
    <location>
        <position position="955"/>
    </location>
</feature>
<feature type="sequence variant" id="VAR_069656" description="In CMD1KK; uncertain significance; dbSNP:rs149887823." evidence="9">
    <original>R</original>
    <variation>W</variation>
    <location>
        <position position="955"/>
    </location>
</feature>
<feature type="sequence variant" id="VAR_069657" description="In CMD1KK; dbSNP:rs864621995." evidence="9">
    <original>P</original>
    <variation>L</variation>
    <location>
        <position position="961"/>
    </location>
</feature>
<feature type="sequence variant" id="VAR_069658" description="In CMD1KK; dbSNP:rs71584501." evidence="7">
    <original>R</original>
    <variation>H</variation>
    <location>
        <position position="1088"/>
    </location>
</feature>
<feature type="sequence variant" id="VAR_069659" description="In CMD1KK and CMH22; results in sarcomere disorganization and premature cell death; dbSNP:rs71534278." evidence="7 8">
    <original>P</original>
    <variation>L</variation>
    <location>
        <position position="1112"/>
    </location>
</feature>
<feature type="sequence variant" id="VAR_049913" description="In dbSNP:rs7079481." evidence="8 9">
    <original>P</original>
    <variation>T</variation>
    <location>
        <position position="1135"/>
    </location>
</feature>
<feature type="sequence variant" id="VAR_069660" description="In dbSNP:rs138313730." evidence="8 11">
    <original>L</original>
    <variation>I</variation>
    <location>
        <position position="1161"/>
    </location>
</feature>
<feature type="sequence variant" id="VAR_069661" description="In CMD1KK; results in sarcomere disorganization and premature cell death; dbSNP:rs71534280." evidence="7">
    <original>V</original>
    <variation>M</variation>
    <location>
        <position position="1195"/>
    </location>
</feature>
<feature type="sequence variant" id="VAR_069662" description="In CMH22; dbSNP:rs199476416." evidence="8">
    <original>A</original>
    <variation>P</variation>
    <location>
        <position position="1265"/>
    </location>
</feature>
<feature type="sequence variant" id="VAR_069663" description="In dbSNP:rs199476417." evidence="8">
    <original>V</original>
    <variation>G</variation>
    <location>
        <position position="1306"/>
    </location>
</feature>
<feature type="sequence conflict" description="In Ref. 2; CAD89906." evidence="14" ref="2">
    <original>Q</original>
    <variation>R</variation>
    <location>
        <position position="139"/>
    </location>
</feature>
<feature type="sequence conflict" description="In Ref. 2; CAD89906." evidence="14" ref="2">
    <original>L</original>
    <variation>S</variation>
    <location>
        <position position="484"/>
    </location>
</feature>
<feature type="sequence conflict" description="In Ref. 2; CAD89906." evidence="14" ref="2">
    <original>D</original>
    <variation>G</variation>
    <location>
        <position position="509"/>
    </location>
</feature>
<feature type="sequence conflict" description="In Ref. 2; CAD89906." evidence="14" ref="2">
    <original>N</original>
    <variation>D</variation>
    <location>
        <position position="601"/>
    </location>
</feature>
<feature type="sequence conflict" description="In Ref. 2; CAD89906." evidence="14" ref="2">
    <original>L</original>
    <variation>S</variation>
    <location>
        <position position="677"/>
    </location>
</feature>
<feature type="sequence conflict" description="In Ref. 2; CAD89906." evidence="14" ref="2">
    <original>F</original>
    <variation>L</variation>
    <location>
        <position position="908"/>
    </location>
</feature>
<feature type="sequence conflict" description="In Ref. 2; CAD38923." evidence="14" ref="2">
    <original>H</original>
    <variation>R</variation>
    <location>
        <position position="991"/>
    </location>
</feature>
<feature type="sequence conflict" description="In Ref. 2; CAD91155." evidence="14" ref="2">
    <original>A</original>
    <variation>T</variation>
    <location>
        <position position="1078"/>
    </location>
</feature>
<feature type="sequence conflict" description="In Ref. 2; CAD38923." evidence="14" ref="2">
    <original>S</original>
    <variation>P</variation>
    <location>
        <position position="1118"/>
    </location>
</feature>